<organism>
    <name type="scientific">Gallus gallus</name>
    <name type="common">Chicken</name>
    <dbReference type="NCBI Taxonomy" id="9031"/>
    <lineage>
        <taxon>Eukaryota</taxon>
        <taxon>Metazoa</taxon>
        <taxon>Chordata</taxon>
        <taxon>Craniata</taxon>
        <taxon>Vertebrata</taxon>
        <taxon>Euteleostomi</taxon>
        <taxon>Archelosauria</taxon>
        <taxon>Archosauria</taxon>
        <taxon>Dinosauria</taxon>
        <taxon>Saurischia</taxon>
        <taxon>Theropoda</taxon>
        <taxon>Coelurosauria</taxon>
        <taxon>Aves</taxon>
        <taxon>Neognathae</taxon>
        <taxon>Galloanserae</taxon>
        <taxon>Galliformes</taxon>
        <taxon>Phasianidae</taxon>
        <taxon>Phasianinae</taxon>
        <taxon>Gallus</taxon>
    </lineage>
</organism>
<comment type="function">
    <text evidence="1">Component of the FERRY complex (Five-subunit Endosomal Rab5 and RNA/ribosome intermediary). The FERRY complex directly interacts with mRNAs and RAB5A, and functions as a RAB5A effector involved in the localization and the distribution of specific mRNAs most likely by mediating their endosomal transport. The complex recruits mRNAs and ribosomes to early endosomes through direct mRNA-interaction (By similarity). Also involved in the modulation of mTOR signaling and expression of mTOR complex components. Involved in the control of actin-cytoskeleton organization (By similarity).</text>
</comment>
<comment type="subunit">
    <text evidence="1">Component of the FERRY complex.</text>
</comment>
<comment type="subcellular location">
    <subcellularLocation>
        <location evidence="1">Cytoplasm</location>
    </subcellularLocation>
    <subcellularLocation>
        <location evidence="1">Cytoplasm</location>
        <location evidence="1">Cytoskeleton</location>
        <location evidence="1">Spindle</location>
    </subcellularLocation>
    <subcellularLocation>
        <location evidence="1">Midbody</location>
    </subcellularLocation>
    <subcellularLocation>
        <location evidence="1">Early endosome</location>
    </subcellularLocation>
    <text evidence="1">Mainly localized in the cytoplasm during interphase. During metaphase, TBCK accumulates at the mitotic spindle. At the end of mitosis, it is detected at the midbody.</text>
</comment>
<comment type="domain">
    <text evidence="2">The protein kinase domain is predicted to be catalytically inactive.</text>
</comment>
<comment type="similarity">
    <text evidence="6">Belongs to the protein kinase superfamily.</text>
</comment>
<comment type="sequence caution" evidence="6">
    <conflict type="erroneous initiation">
        <sequence resource="EMBL-CDS" id="CAH65423"/>
    </conflict>
</comment>
<sequence>MFPLRDTEMGASTFFASALPHDVCGSNGLPLTPNSIKILGRFQILKTITHPRLCQYVDITRGKHERLVVAAEHCENSLEDLLREGKLVSSSRILCIAYEVLQGLQYMNKHGMVHRALSPRNILLDRKGHVKLAKFGLYHMTAQGVDVDFPIGYPSYLAPEVIAQGMVKPSDHTQCEKPLPSGPKSDLWSLGIILFELCVGRKLFQTLEIAERLKFVITLGYVDDIVTVLAEEHGCLDIIKDLSENVITLLKKCLTFQPSKRPTPEELMHDHLFSEVSLTYPPFHKPAGLFSSSPRCADLTLPEDISQLCKDEDNDYLAERSIEEVYYLWCLAGGDLEKELVNKEIIRSKPPVCTLPNFVLEDGESFGQGRDRSSLLDDTTVTLSLCQLRNRLKDVGGEAFYPLLEDDQSTLPHSNSSSELSAAANLPLIIRERDTEYQLNRIVLFDRLLKAYPYKKNQIWKEARVDIPPLLRGITWAALLGVEGAIQAKYDAIDKDTPIPTDRQIEVDIPRCHQYDELLSSPEGHAKFRRVLKAWVVSHPDLVYWQGLDSLCAPFLYLNFNNEALAYACMSAFIPKYLYNFFLKDNSHVIQEYLTVFSQMIAFHDPELSNHLNEIGFIPDLYAIPWFLTMFTHVFPLHKIFHLWDTLLLGNSSFPFCIGVAILQQLRDRLLANGFNECILLFSDLPEIDIERCVRESINLFRWTPKSATYRQYAQPPRQANESNGTRSSMSCFSVDYQEAPRGDLSRDSIKLDDLKAEVSPRISAEDLIDLCELTGPSHSKTPIKKTKSSKPKLLVVDIRNSEDFNRGHISGSINVPFASAFTAEGDLIQCPATATLQSFKGRVVVIVGNAVKNTAAFAAHLVKSKYPRVCILDGGINKIKPTGLLTVPSPQI</sequence>
<reference evidence="7" key="1">
    <citation type="journal article" date="2005" name="Genome Biol.">
        <title>Full-length cDNAs from chicken bursal lymphocytes to facilitate gene function analysis.</title>
        <authorList>
            <person name="Caldwell R.B."/>
            <person name="Kierzek A.M."/>
            <person name="Arakawa H."/>
            <person name="Bezzubov Y."/>
            <person name="Zaim J."/>
            <person name="Fiedler P."/>
            <person name="Kutter S."/>
            <person name="Blagodatski A."/>
            <person name="Kostovska D."/>
            <person name="Koter M."/>
            <person name="Plachy J."/>
            <person name="Carninci P."/>
            <person name="Hayashizaki Y."/>
            <person name="Buerstedde J.-M."/>
        </authorList>
    </citation>
    <scope>NUCLEOTIDE SEQUENCE [LARGE SCALE MRNA]</scope>
    <source>
        <strain evidence="7">CB</strain>
        <tissue evidence="7">Bursa of Fabricius</tissue>
    </source>
</reference>
<keyword id="KW-0963">Cytoplasm</keyword>
<keyword id="KW-0206">Cytoskeleton</keyword>
<keyword id="KW-0967">Endosome</keyword>
<keyword id="KW-1185">Reference proteome</keyword>
<accession>Q5F361</accession>
<name>TBCK_CHICK</name>
<gene>
    <name evidence="1" type="primary">TBCK</name>
    <name type="ORF">RCJMB04_32m11</name>
</gene>
<protein>
    <recommendedName>
        <fullName>TBC domain-containing protein kinase-like protein</fullName>
    </recommendedName>
    <alternativeName>
        <fullName evidence="1">FERRY endosomal RAB5 effector complex subunit 1</fullName>
    </alternativeName>
</protein>
<feature type="chain" id="PRO_0000273280" description="TBC domain-containing protein kinase-like protein">
    <location>
        <begin position="1"/>
        <end position="893"/>
    </location>
</feature>
<feature type="domain" description="Protein kinase" evidence="3">
    <location>
        <begin position="1"/>
        <end position="274"/>
    </location>
</feature>
<feature type="domain" description="Rab-GAP TBC" evidence="4">
    <location>
        <begin position="466"/>
        <end position="651"/>
    </location>
</feature>
<feature type="domain" description="Rhodanese" evidence="5">
    <location>
        <begin position="790"/>
        <end position="889"/>
    </location>
</feature>
<dbReference type="EMBL" id="AJ851789">
    <property type="protein sequence ID" value="CAH65423.1"/>
    <property type="status" value="ALT_INIT"/>
    <property type="molecule type" value="mRNA"/>
</dbReference>
<dbReference type="RefSeq" id="NP_001012595.1">
    <property type="nucleotide sequence ID" value="NM_001012577.1"/>
</dbReference>
<dbReference type="SMR" id="Q5F361"/>
<dbReference type="FunCoup" id="Q5F361">
    <property type="interactions" value="1196"/>
</dbReference>
<dbReference type="STRING" id="9031.ENSGALP00000017170"/>
<dbReference type="PaxDb" id="9031-ENSGALP00000017170"/>
<dbReference type="GeneID" id="422534"/>
<dbReference type="KEGG" id="gga:422534"/>
<dbReference type="CTD" id="93627"/>
<dbReference type="VEuPathDB" id="HostDB:geneid_422534"/>
<dbReference type="eggNOG" id="KOG1093">
    <property type="taxonomic scope" value="Eukaryota"/>
</dbReference>
<dbReference type="InParanoid" id="Q5F361"/>
<dbReference type="OrthoDB" id="1668230at2759"/>
<dbReference type="PhylomeDB" id="Q5F361"/>
<dbReference type="PRO" id="PR:Q5F361"/>
<dbReference type="Proteomes" id="UP000000539">
    <property type="component" value="Unassembled WGS sequence"/>
</dbReference>
<dbReference type="GO" id="GO:0005769">
    <property type="term" value="C:early endosome"/>
    <property type="evidence" value="ECO:0007669"/>
    <property type="project" value="UniProtKB-SubCell"/>
</dbReference>
<dbReference type="GO" id="GO:0030496">
    <property type="term" value="C:midbody"/>
    <property type="evidence" value="ECO:0007669"/>
    <property type="project" value="UniProtKB-SubCell"/>
</dbReference>
<dbReference type="GO" id="GO:0005819">
    <property type="term" value="C:spindle"/>
    <property type="evidence" value="ECO:0007669"/>
    <property type="project" value="UniProtKB-SubCell"/>
</dbReference>
<dbReference type="GO" id="GO:0005524">
    <property type="term" value="F:ATP binding"/>
    <property type="evidence" value="ECO:0007669"/>
    <property type="project" value="InterPro"/>
</dbReference>
<dbReference type="GO" id="GO:0005096">
    <property type="term" value="F:GTPase activator activity"/>
    <property type="evidence" value="ECO:0000318"/>
    <property type="project" value="GO_Central"/>
</dbReference>
<dbReference type="GO" id="GO:0004672">
    <property type="term" value="F:protein kinase activity"/>
    <property type="evidence" value="ECO:0007669"/>
    <property type="project" value="InterPro"/>
</dbReference>
<dbReference type="FunFam" id="1.10.472.80:FF:000015">
    <property type="entry name" value="TBC domain-containing protein kinase-like protein"/>
    <property type="match status" value="1"/>
</dbReference>
<dbReference type="FunFam" id="1.10.510.10:FF:000332">
    <property type="entry name" value="TBC domain-containing protein kinase-like protein"/>
    <property type="match status" value="1"/>
</dbReference>
<dbReference type="FunFam" id="3.40.250.10:FF:000018">
    <property type="entry name" value="TBC domain-containing protein kinase-like protein"/>
    <property type="match status" value="1"/>
</dbReference>
<dbReference type="FunFam" id="1.10.8.270:FF:000012">
    <property type="entry name" value="TBC domain-containing protein kinase-like protein-like"/>
    <property type="match status" value="1"/>
</dbReference>
<dbReference type="Gene3D" id="1.10.8.270">
    <property type="entry name" value="putative rabgap domain of human tbc1 domain family member 14 like domains"/>
    <property type="match status" value="1"/>
</dbReference>
<dbReference type="Gene3D" id="3.40.250.10">
    <property type="entry name" value="Rhodanese-like domain"/>
    <property type="match status" value="1"/>
</dbReference>
<dbReference type="Gene3D" id="1.10.510.10">
    <property type="entry name" value="Transferase(Phosphotransferase) domain 1"/>
    <property type="match status" value="1"/>
</dbReference>
<dbReference type="Gene3D" id="1.10.472.80">
    <property type="entry name" value="Ypt/Rab-GAP domain of gyp1p, domain 3"/>
    <property type="match status" value="1"/>
</dbReference>
<dbReference type="InterPro" id="IPR011009">
    <property type="entry name" value="Kinase-like_dom_sf"/>
</dbReference>
<dbReference type="InterPro" id="IPR000719">
    <property type="entry name" value="Prot_kinase_dom"/>
</dbReference>
<dbReference type="InterPro" id="IPR000195">
    <property type="entry name" value="Rab-GAP-TBC_dom"/>
</dbReference>
<dbReference type="InterPro" id="IPR035969">
    <property type="entry name" value="Rab-GAP_TBC_sf"/>
</dbReference>
<dbReference type="InterPro" id="IPR001763">
    <property type="entry name" value="Rhodanese-like_dom"/>
</dbReference>
<dbReference type="InterPro" id="IPR036873">
    <property type="entry name" value="Rhodanese-like_dom_sf"/>
</dbReference>
<dbReference type="PANTHER" id="PTHR24345">
    <property type="entry name" value="SERINE/THREONINE-PROTEIN KINASE PLK"/>
    <property type="match status" value="1"/>
</dbReference>
<dbReference type="PANTHER" id="PTHR24345:SF87">
    <property type="entry name" value="TBC1 DOMAIN CONTAINING KINASE"/>
    <property type="match status" value="1"/>
</dbReference>
<dbReference type="Pfam" id="PF00069">
    <property type="entry name" value="Pkinase"/>
    <property type="match status" value="1"/>
</dbReference>
<dbReference type="Pfam" id="PF00566">
    <property type="entry name" value="RabGAP-TBC"/>
    <property type="match status" value="1"/>
</dbReference>
<dbReference type="Pfam" id="PF00581">
    <property type="entry name" value="Rhodanese"/>
    <property type="match status" value="1"/>
</dbReference>
<dbReference type="SMART" id="SM00450">
    <property type="entry name" value="RHOD"/>
    <property type="match status" value="1"/>
</dbReference>
<dbReference type="SMART" id="SM00164">
    <property type="entry name" value="TBC"/>
    <property type="match status" value="1"/>
</dbReference>
<dbReference type="SUPFAM" id="SSF56112">
    <property type="entry name" value="Protein kinase-like (PK-like)"/>
    <property type="match status" value="1"/>
</dbReference>
<dbReference type="SUPFAM" id="SSF52821">
    <property type="entry name" value="Rhodanese/Cell cycle control phosphatase"/>
    <property type="match status" value="1"/>
</dbReference>
<dbReference type="SUPFAM" id="SSF47923">
    <property type="entry name" value="Ypt/Rab-GAP domain of gyp1p"/>
    <property type="match status" value="2"/>
</dbReference>
<dbReference type="PROSITE" id="PS50011">
    <property type="entry name" value="PROTEIN_KINASE_DOM"/>
    <property type="match status" value="1"/>
</dbReference>
<dbReference type="PROSITE" id="PS50206">
    <property type="entry name" value="RHODANESE_3"/>
    <property type="match status" value="1"/>
</dbReference>
<dbReference type="PROSITE" id="PS50086">
    <property type="entry name" value="TBC_RABGAP"/>
    <property type="match status" value="1"/>
</dbReference>
<evidence type="ECO:0000250" key="1">
    <source>
        <dbReference type="UniProtKB" id="Q8TEA7"/>
    </source>
</evidence>
<evidence type="ECO:0000255" key="2"/>
<evidence type="ECO:0000255" key="3">
    <source>
        <dbReference type="PROSITE-ProRule" id="PRU00159"/>
    </source>
</evidence>
<evidence type="ECO:0000255" key="4">
    <source>
        <dbReference type="PROSITE-ProRule" id="PRU00163"/>
    </source>
</evidence>
<evidence type="ECO:0000255" key="5">
    <source>
        <dbReference type="PROSITE-ProRule" id="PRU00173"/>
    </source>
</evidence>
<evidence type="ECO:0000305" key="6"/>
<evidence type="ECO:0000312" key="7">
    <source>
        <dbReference type="EMBL" id="CAH65423.1"/>
    </source>
</evidence>
<proteinExistence type="evidence at transcript level"/>